<dbReference type="EMBL" id="AK014093">
    <property type="protein sequence ID" value="BAB29151.2"/>
    <property type="status" value="ALT_INIT"/>
    <property type="molecule type" value="mRNA"/>
</dbReference>
<dbReference type="EMBL" id="AK017798">
    <property type="protein sequence ID" value="BAB30939.1"/>
    <property type="molecule type" value="mRNA"/>
</dbReference>
<dbReference type="EMBL" id="BC032154">
    <property type="protein sequence ID" value="AAH32154.1"/>
    <property type="molecule type" value="mRNA"/>
</dbReference>
<dbReference type="CCDS" id="CCDS48250.1">
    <molecule id="Q8K2A1-1"/>
</dbReference>
<dbReference type="RefSeq" id="NP_082726.2">
    <molecule id="Q8K2A1-1"/>
    <property type="nucleotide sequence ID" value="NM_028450.3"/>
</dbReference>
<dbReference type="SMR" id="Q8K2A1"/>
<dbReference type="BioGRID" id="214196">
    <property type="interactions" value="2"/>
</dbReference>
<dbReference type="FunCoup" id="Q8K2A1">
    <property type="interactions" value="1210"/>
</dbReference>
<dbReference type="STRING" id="10090.ENSMUSP00000074115"/>
<dbReference type="GlyGen" id="Q8K2A1">
    <property type="glycosylation" value="1 site, 1 N-linked glycan (1 site)"/>
</dbReference>
<dbReference type="iPTMnet" id="Q8K2A1"/>
<dbReference type="PhosphoSitePlus" id="Q8K2A1"/>
<dbReference type="PaxDb" id="10090-ENSMUSP00000074115"/>
<dbReference type="PeptideAtlas" id="Q8K2A1"/>
<dbReference type="ProteomicsDB" id="271114">
    <molecule id="Q8K2A1-1"/>
</dbReference>
<dbReference type="ProteomicsDB" id="271115">
    <molecule id="Q8K2A1-2"/>
</dbReference>
<dbReference type="Pumba" id="Q8K2A1"/>
<dbReference type="Antibodypedia" id="19788">
    <property type="antibodies" value="188 antibodies from 31 providers"/>
</dbReference>
<dbReference type="DNASU" id="70676"/>
<dbReference type="Ensembl" id="ENSMUST00000074525.10">
    <molecule id="Q8K2A1-1"/>
    <property type="protein sequence ID" value="ENSMUSP00000074115.4"/>
    <property type="gene ID" value="ENSMUSG00000056870.10"/>
</dbReference>
<dbReference type="Ensembl" id="ENSMUST00000160854.8">
    <molecule id="Q8K2A1-2"/>
    <property type="protein sequence ID" value="ENSMUSP00000125506.2"/>
    <property type="gene ID" value="ENSMUSG00000056870.10"/>
</dbReference>
<dbReference type="GeneID" id="70676"/>
<dbReference type="KEGG" id="mmu:70676"/>
<dbReference type="UCSC" id="uc007awl.2">
    <molecule id="Q8K2A1-2"/>
    <property type="organism name" value="mouse"/>
</dbReference>
<dbReference type="UCSC" id="uc007awm.2">
    <molecule id="Q8K2A1-1"/>
    <property type="organism name" value="mouse"/>
</dbReference>
<dbReference type="AGR" id="MGI:1920407"/>
<dbReference type="CTD" id="51454"/>
<dbReference type="MGI" id="MGI:1920407">
    <property type="gene designation" value="Gulp1"/>
</dbReference>
<dbReference type="VEuPathDB" id="HostDB:ENSMUSG00000056870"/>
<dbReference type="eggNOG" id="KOG3536">
    <property type="taxonomic scope" value="Eukaryota"/>
</dbReference>
<dbReference type="GeneTree" id="ENSGT00940000156186"/>
<dbReference type="HOGENOM" id="CLU_024530_0_0_1"/>
<dbReference type="InParanoid" id="Q8K2A1"/>
<dbReference type="OMA" id="XFARHIK"/>
<dbReference type="OrthoDB" id="10057585at2759"/>
<dbReference type="PhylomeDB" id="Q8K2A1"/>
<dbReference type="TreeFam" id="TF314159"/>
<dbReference type="BioGRID-ORCS" id="70676">
    <property type="hits" value="0 hits in 75 CRISPR screens"/>
</dbReference>
<dbReference type="ChiTaRS" id="Gulp1">
    <property type="organism name" value="mouse"/>
</dbReference>
<dbReference type="PRO" id="PR:Q8K2A1"/>
<dbReference type="Proteomes" id="UP000000589">
    <property type="component" value="Chromosome 1"/>
</dbReference>
<dbReference type="RNAct" id="Q8K2A1">
    <property type="molecule type" value="protein"/>
</dbReference>
<dbReference type="Bgee" id="ENSMUSG00000056870">
    <property type="expression patterns" value="Expressed in sciatic nerve and 218 other cell types or tissues"/>
</dbReference>
<dbReference type="ExpressionAtlas" id="Q8K2A1">
    <property type="expression patterns" value="baseline and differential"/>
</dbReference>
<dbReference type="GO" id="GO:0005737">
    <property type="term" value="C:cytoplasm"/>
    <property type="evidence" value="ECO:0007669"/>
    <property type="project" value="UniProtKB-SubCell"/>
</dbReference>
<dbReference type="GO" id="GO:0006915">
    <property type="term" value="P:apoptotic process"/>
    <property type="evidence" value="ECO:0007669"/>
    <property type="project" value="UniProtKB-KW"/>
</dbReference>
<dbReference type="GO" id="GO:0006869">
    <property type="term" value="P:lipid transport"/>
    <property type="evidence" value="ECO:0007669"/>
    <property type="project" value="UniProtKB-KW"/>
</dbReference>
<dbReference type="GO" id="GO:0006911">
    <property type="term" value="P:phagocytosis, engulfment"/>
    <property type="evidence" value="ECO:0000266"/>
    <property type="project" value="MGI"/>
</dbReference>
<dbReference type="CDD" id="cd01273">
    <property type="entry name" value="PTB_CED-6"/>
    <property type="match status" value="1"/>
</dbReference>
<dbReference type="FunFam" id="2.30.29.30:FF:000118">
    <property type="entry name" value="GULP PTB domain containing engulfment adaptor 1"/>
    <property type="match status" value="1"/>
</dbReference>
<dbReference type="Gene3D" id="2.30.29.30">
    <property type="entry name" value="Pleckstrin-homology domain (PH domain)/Phosphotyrosine-binding domain (PTB)"/>
    <property type="match status" value="1"/>
</dbReference>
<dbReference type="InterPro" id="IPR051133">
    <property type="entry name" value="Adapter_Engulfment-Domain"/>
</dbReference>
<dbReference type="InterPro" id="IPR011993">
    <property type="entry name" value="PH-like_dom_sf"/>
</dbReference>
<dbReference type="InterPro" id="IPR006020">
    <property type="entry name" value="PTB/PI_dom"/>
</dbReference>
<dbReference type="PANTHER" id="PTHR11232">
    <property type="entry name" value="PHOSPHOTYROSINE INTERACTION DOMAIN-CONTAINING FAMILY MEMBER"/>
    <property type="match status" value="1"/>
</dbReference>
<dbReference type="PANTHER" id="PTHR11232:SF78">
    <property type="entry name" value="PTB DOMAIN-CONTAINING ENGULFMENT ADAPTER PROTEIN 1"/>
    <property type="match status" value="1"/>
</dbReference>
<dbReference type="Pfam" id="PF00640">
    <property type="entry name" value="PID"/>
    <property type="match status" value="1"/>
</dbReference>
<dbReference type="SMART" id="SM00462">
    <property type="entry name" value="PTB"/>
    <property type="match status" value="1"/>
</dbReference>
<dbReference type="SUPFAM" id="SSF50729">
    <property type="entry name" value="PH domain-like"/>
    <property type="match status" value="1"/>
</dbReference>
<dbReference type="PROSITE" id="PS01179">
    <property type="entry name" value="PID"/>
    <property type="match status" value="1"/>
</dbReference>
<reference key="1">
    <citation type="journal article" date="2005" name="Science">
        <title>The transcriptional landscape of the mammalian genome.</title>
        <authorList>
            <person name="Carninci P."/>
            <person name="Kasukawa T."/>
            <person name="Katayama S."/>
            <person name="Gough J."/>
            <person name="Frith M.C."/>
            <person name="Maeda N."/>
            <person name="Oyama R."/>
            <person name="Ravasi T."/>
            <person name="Lenhard B."/>
            <person name="Wells C."/>
            <person name="Kodzius R."/>
            <person name="Shimokawa K."/>
            <person name="Bajic V.B."/>
            <person name="Brenner S.E."/>
            <person name="Batalov S."/>
            <person name="Forrest A.R."/>
            <person name="Zavolan M."/>
            <person name="Davis M.J."/>
            <person name="Wilming L.G."/>
            <person name="Aidinis V."/>
            <person name="Allen J.E."/>
            <person name="Ambesi-Impiombato A."/>
            <person name="Apweiler R."/>
            <person name="Aturaliya R.N."/>
            <person name="Bailey T.L."/>
            <person name="Bansal M."/>
            <person name="Baxter L."/>
            <person name="Beisel K.W."/>
            <person name="Bersano T."/>
            <person name="Bono H."/>
            <person name="Chalk A.M."/>
            <person name="Chiu K.P."/>
            <person name="Choudhary V."/>
            <person name="Christoffels A."/>
            <person name="Clutterbuck D.R."/>
            <person name="Crowe M.L."/>
            <person name="Dalla E."/>
            <person name="Dalrymple B.P."/>
            <person name="de Bono B."/>
            <person name="Della Gatta G."/>
            <person name="di Bernardo D."/>
            <person name="Down T."/>
            <person name="Engstrom P."/>
            <person name="Fagiolini M."/>
            <person name="Faulkner G."/>
            <person name="Fletcher C.F."/>
            <person name="Fukushima T."/>
            <person name="Furuno M."/>
            <person name="Futaki S."/>
            <person name="Gariboldi M."/>
            <person name="Georgii-Hemming P."/>
            <person name="Gingeras T.R."/>
            <person name="Gojobori T."/>
            <person name="Green R.E."/>
            <person name="Gustincich S."/>
            <person name="Harbers M."/>
            <person name="Hayashi Y."/>
            <person name="Hensch T.K."/>
            <person name="Hirokawa N."/>
            <person name="Hill D."/>
            <person name="Huminiecki L."/>
            <person name="Iacono M."/>
            <person name="Ikeo K."/>
            <person name="Iwama A."/>
            <person name="Ishikawa T."/>
            <person name="Jakt M."/>
            <person name="Kanapin A."/>
            <person name="Katoh M."/>
            <person name="Kawasawa Y."/>
            <person name="Kelso J."/>
            <person name="Kitamura H."/>
            <person name="Kitano H."/>
            <person name="Kollias G."/>
            <person name="Krishnan S.P."/>
            <person name="Kruger A."/>
            <person name="Kummerfeld S.K."/>
            <person name="Kurochkin I.V."/>
            <person name="Lareau L.F."/>
            <person name="Lazarevic D."/>
            <person name="Lipovich L."/>
            <person name="Liu J."/>
            <person name="Liuni S."/>
            <person name="McWilliam S."/>
            <person name="Madan Babu M."/>
            <person name="Madera M."/>
            <person name="Marchionni L."/>
            <person name="Matsuda H."/>
            <person name="Matsuzawa S."/>
            <person name="Miki H."/>
            <person name="Mignone F."/>
            <person name="Miyake S."/>
            <person name="Morris K."/>
            <person name="Mottagui-Tabar S."/>
            <person name="Mulder N."/>
            <person name="Nakano N."/>
            <person name="Nakauchi H."/>
            <person name="Ng P."/>
            <person name="Nilsson R."/>
            <person name="Nishiguchi S."/>
            <person name="Nishikawa S."/>
            <person name="Nori F."/>
            <person name="Ohara O."/>
            <person name="Okazaki Y."/>
            <person name="Orlando V."/>
            <person name="Pang K.C."/>
            <person name="Pavan W.J."/>
            <person name="Pavesi G."/>
            <person name="Pesole G."/>
            <person name="Petrovsky N."/>
            <person name="Piazza S."/>
            <person name="Reed J."/>
            <person name="Reid J.F."/>
            <person name="Ring B.Z."/>
            <person name="Ringwald M."/>
            <person name="Rost B."/>
            <person name="Ruan Y."/>
            <person name="Salzberg S.L."/>
            <person name="Sandelin A."/>
            <person name="Schneider C."/>
            <person name="Schoenbach C."/>
            <person name="Sekiguchi K."/>
            <person name="Semple C.A."/>
            <person name="Seno S."/>
            <person name="Sessa L."/>
            <person name="Sheng Y."/>
            <person name="Shibata Y."/>
            <person name="Shimada H."/>
            <person name="Shimada K."/>
            <person name="Silva D."/>
            <person name="Sinclair B."/>
            <person name="Sperling S."/>
            <person name="Stupka E."/>
            <person name="Sugiura K."/>
            <person name="Sultana R."/>
            <person name="Takenaka Y."/>
            <person name="Taki K."/>
            <person name="Tammoja K."/>
            <person name="Tan S.L."/>
            <person name="Tang S."/>
            <person name="Taylor M.S."/>
            <person name="Tegner J."/>
            <person name="Teichmann S.A."/>
            <person name="Ueda H.R."/>
            <person name="van Nimwegen E."/>
            <person name="Verardo R."/>
            <person name="Wei C.L."/>
            <person name="Yagi K."/>
            <person name="Yamanishi H."/>
            <person name="Zabarovsky E."/>
            <person name="Zhu S."/>
            <person name="Zimmer A."/>
            <person name="Hide W."/>
            <person name="Bult C."/>
            <person name="Grimmond S.M."/>
            <person name="Teasdale R.D."/>
            <person name="Liu E.T."/>
            <person name="Brusic V."/>
            <person name="Quackenbush J."/>
            <person name="Wahlestedt C."/>
            <person name="Mattick J.S."/>
            <person name="Hume D.A."/>
            <person name="Kai C."/>
            <person name="Sasaki D."/>
            <person name="Tomaru Y."/>
            <person name="Fukuda S."/>
            <person name="Kanamori-Katayama M."/>
            <person name="Suzuki M."/>
            <person name="Aoki J."/>
            <person name="Arakawa T."/>
            <person name="Iida J."/>
            <person name="Imamura K."/>
            <person name="Itoh M."/>
            <person name="Kato T."/>
            <person name="Kawaji H."/>
            <person name="Kawagashira N."/>
            <person name="Kawashima T."/>
            <person name="Kojima M."/>
            <person name="Kondo S."/>
            <person name="Konno H."/>
            <person name="Nakano K."/>
            <person name="Ninomiya N."/>
            <person name="Nishio T."/>
            <person name="Okada M."/>
            <person name="Plessy C."/>
            <person name="Shibata K."/>
            <person name="Shiraki T."/>
            <person name="Suzuki S."/>
            <person name="Tagami M."/>
            <person name="Waki K."/>
            <person name="Watahiki A."/>
            <person name="Okamura-Oho Y."/>
            <person name="Suzuki H."/>
            <person name="Kawai J."/>
            <person name="Hayashizaki Y."/>
        </authorList>
    </citation>
    <scope>NUCLEOTIDE SEQUENCE [LARGE SCALE MRNA] (ISOFORM 2)</scope>
    <scope>NUCLEOTIDE SEQUENCE [LARGE SCALE MRNA] OF 3-304 (ISOFORM 1)</scope>
    <source>
        <strain>C57BL/6J</strain>
        <tissue>Embryo</tissue>
        <tissue>Embryonic head</tissue>
    </source>
</reference>
<reference key="2">
    <citation type="journal article" date="2004" name="Genome Res.">
        <title>The status, quality, and expansion of the NIH full-length cDNA project: the Mammalian Gene Collection (MGC).</title>
        <authorList>
            <consortium name="The MGC Project Team"/>
        </authorList>
    </citation>
    <scope>NUCLEOTIDE SEQUENCE [LARGE SCALE MRNA] (ISOFORM 1)</scope>
    <source>
        <strain>Czech II</strain>
        <tissue>Mammary tumor</tissue>
    </source>
</reference>
<reference key="3">
    <citation type="journal article" date="2002" name="J. Biol. Chem.">
        <title>Interaction of CED-6/GULP, an adapter protein involved in engulfment of apoptotic cells with CED-1 and CD91/low density lipoprotein receptor-related protein (LRP).</title>
        <authorList>
            <person name="Su H.P."/>
            <person name="Nakada-Tsukui K."/>
            <person name="Tosello-Trampont A.-C."/>
            <person name="Li Y."/>
            <person name="Bu G."/>
            <person name="Henson P.M."/>
            <person name="Ravichandran K.S."/>
        </authorList>
    </citation>
    <scope>INTERACTION WITH LRP1</scope>
</reference>
<reference key="4">
    <citation type="journal article" date="2006" name="Brain Res.">
        <title>A rat homologue of CED-6 is expressed in neurons and interacts with clathrin.</title>
        <authorList>
            <person name="Martins-Silva C."/>
            <person name="Ferreira L.T."/>
            <person name="Cyr M."/>
            <person name="Koenen J."/>
            <person name="Fernandes D.R."/>
            <person name="Carvalho N.R."/>
            <person name="Ribeiro C.B."/>
            <person name="Marion S."/>
            <person name="Chavez-Olortegui C."/>
            <person name="Prado M.A."/>
            <person name="Prado V.F."/>
        </authorList>
    </citation>
    <scope>TISSUE SPECIFICITY</scope>
</reference>
<reference key="5">
    <citation type="journal article" date="2007" name="Curr. Biol.">
        <title>Regulation of Arf6 and ACAP1 signaling by the PTB-domain-containing adaptor protein GULP.</title>
        <authorList>
            <person name="Ma Z."/>
            <person name="Nie Z."/>
            <person name="Luo R."/>
            <person name="Casanova J.E."/>
            <person name="Ravichandran K.S."/>
        </authorList>
    </citation>
    <scope>FUNCTION</scope>
    <scope>INTERACTION WITH ARF6 AND ACAP1</scope>
    <scope>IDENTIFICATION IN A COMPLEX WITH ACAP1 AND ARF6</scope>
</reference>
<reference key="6">
    <citation type="journal article" date="2008" name="J. Biol. Chem.">
        <title>Requirement of adaptor protein GULP during stabilin-2-mediated cell corpse engulfment.</title>
        <authorList>
            <person name="Park S.Y."/>
            <person name="Kang K.B."/>
            <person name="Thapa N."/>
            <person name="Kim S.Y."/>
            <person name="Lee S.J."/>
            <person name="Kim I.S."/>
        </authorList>
    </citation>
    <scope>INTERACTION WITH STAB2</scope>
</reference>
<reference key="7">
    <citation type="journal article" date="2009" name="Mol. Cell. Proteomics">
        <title>Large scale localization of protein phosphorylation by use of electron capture dissociation mass spectrometry.</title>
        <authorList>
            <person name="Sweet S.M."/>
            <person name="Bailey C.M."/>
            <person name="Cunningham D.L."/>
            <person name="Heath J.K."/>
            <person name="Cooper H.J."/>
        </authorList>
    </citation>
    <scope>IDENTIFICATION BY MASS SPECTROMETRY [LARGE SCALE ANALYSIS]</scope>
    <source>
        <tissue>Embryonic fibroblast</tissue>
    </source>
</reference>
<reference key="8">
    <citation type="journal article" date="2010" name="Cell">
        <title>A tissue-specific atlas of mouse protein phosphorylation and expression.</title>
        <authorList>
            <person name="Huttlin E.L."/>
            <person name="Jedrychowski M.P."/>
            <person name="Elias J.E."/>
            <person name="Goswami T."/>
            <person name="Rad R."/>
            <person name="Beausoleil S.A."/>
            <person name="Villen J."/>
            <person name="Haas W."/>
            <person name="Sowa M.E."/>
            <person name="Gygi S.P."/>
        </authorList>
    </citation>
    <scope>IDENTIFICATION BY MASS SPECTROMETRY [LARGE SCALE ANALYSIS]</scope>
    <source>
        <tissue>Lung</tissue>
        <tissue>Spleen</tissue>
    </source>
</reference>
<proteinExistence type="evidence at protein level"/>
<organism>
    <name type="scientific">Mus musculus</name>
    <name type="common">Mouse</name>
    <dbReference type="NCBI Taxonomy" id="10090"/>
    <lineage>
        <taxon>Eukaryota</taxon>
        <taxon>Metazoa</taxon>
        <taxon>Chordata</taxon>
        <taxon>Craniata</taxon>
        <taxon>Vertebrata</taxon>
        <taxon>Euteleostomi</taxon>
        <taxon>Mammalia</taxon>
        <taxon>Eutheria</taxon>
        <taxon>Euarchontoglires</taxon>
        <taxon>Glires</taxon>
        <taxon>Rodentia</taxon>
        <taxon>Myomorpha</taxon>
        <taxon>Muroidea</taxon>
        <taxon>Muridae</taxon>
        <taxon>Murinae</taxon>
        <taxon>Mus</taxon>
        <taxon>Mus</taxon>
    </lineage>
</organism>
<feature type="chain" id="PRO_0000296680" description="PTB domain-containing engulfment adapter protein 1">
    <location>
        <begin position="1"/>
        <end position="304"/>
    </location>
</feature>
<feature type="domain" description="PID" evidence="4">
    <location>
        <begin position="21"/>
        <end position="176"/>
    </location>
</feature>
<feature type="coiled-coil region" evidence="3">
    <location>
        <begin position="159"/>
        <end position="200"/>
    </location>
</feature>
<feature type="modified residue" description="Phosphothreonine" evidence="2">
    <location>
        <position position="16"/>
    </location>
</feature>
<feature type="modified residue" description="Phosphoserine" evidence="2">
    <location>
        <position position="223"/>
    </location>
</feature>
<feature type="splice variant" id="VSP_027252" description="In isoform 2." evidence="9">
    <original>EGFKMGLTLEGTVFCLDPLDSRC</original>
    <variation>VTILKDYLFLLIWNNNKMFLPTLSPLLL</variation>
    <location>
        <begin position="282"/>
        <end position="304"/>
    </location>
</feature>
<feature type="sequence conflict" description="In Ref. 1; BAB29151." evidence="10" ref="1">
    <original>P</original>
    <variation>L</variation>
    <location>
        <position position="17"/>
    </location>
</feature>
<feature type="sequence conflict" description="In Ref. 1; BAB29151." evidence="10" ref="1">
    <original>F</original>
    <variation>L</variation>
    <location>
        <position position="269"/>
    </location>
</feature>
<accession>Q8K2A1</accession>
<accession>Q9CRV4</accession>
<accession>Q9CYD2</accession>
<evidence type="ECO:0000250" key="1"/>
<evidence type="ECO:0000250" key="2">
    <source>
        <dbReference type="UniProtKB" id="Q9UBP9"/>
    </source>
</evidence>
<evidence type="ECO:0000255" key="3"/>
<evidence type="ECO:0000255" key="4">
    <source>
        <dbReference type="PROSITE-ProRule" id="PRU00148"/>
    </source>
</evidence>
<evidence type="ECO:0000269" key="5">
    <source>
    </source>
</evidence>
<evidence type="ECO:0000269" key="6">
    <source>
    </source>
</evidence>
<evidence type="ECO:0000269" key="7">
    <source>
    </source>
</evidence>
<evidence type="ECO:0000269" key="8">
    <source>
    </source>
</evidence>
<evidence type="ECO:0000303" key="9">
    <source>
    </source>
</evidence>
<evidence type="ECO:0000305" key="10"/>
<protein>
    <recommendedName>
        <fullName>PTB domain-containing engulfment adapter protein 1</fullName>
    </recommendedName>
    <alternativeName>
        <fullName>Cell death protein 6 homolog</fullName>
    </alternativeName>
    <alternativeName>
        <fullName>PTB domain adapter protein CED-6</fullName>
    </alternativeName>
    <alternativeName>
        <fullName>Protein GULP</fullName>
    </alternativeName>
</protein>
<sequence length="304" mass="34470">MNRAFSRKKDKTWMHTPEALSKHYIPYNAKFLGSTEVEQPKGTEVVRDAVRKLKFARHIKKSEGQKIPKVELQISIYGVKILEPKTKEVQHNCQLHRISFCADDKTDKRIFTFICKDSESNKHLCFVFDSEKCAEEITLTIGQAFDLAYRKFLESGGKDVETRKQIAGMQKRIQDLETENMELKNKVQDLESRLRTTQVSTSPAHGVTVMSPSTDIFDMIPFSPISHQSPTSARNGTQLPPIPSRSAETKRDLFGAEPFDPFNCGSGDFPPDIQSKLDEMQEGFKMGLTLEGTVFCLDPLDSRC</sequence>
<comment type="function">
    <text evidence="1 7">Modulates cellular glycosphingolipid and cholesterol transport. May play a role in the internalization of various LRP1 ligands, such as PSAP (By similarity). May function as an adapter protein. Required for efficient phagocytosis of apoptotic cells. Increases cellular levels of GTP-bound ARF6.</text>
</comment>
<comment type="subunit">
    <text evidence="1 5 7 8">Homodimer. Interacts with clathrin and MEGF10 (By similarity). Interacts with GDP-bound ARF6, but not with GTP-bound ARF6. Part of a complex composed of GULP1, ACAP1 and ARF6. Interacts with ACAP1, LRP1 and STAB2.</text>
</comment>
<comment type="subcellular location">
    <subcellularLocation>
        <location evidence="1">Cytoplasm</location>
    </subcellularLocation>
    <text evidence="1">May associate with the cytoplasmic side of the plasma membrane and early endosomes.</text>
</comment>
<comment type="alternative products">
    <event type="alternative splicing"/>
    <isoform>
        <id>Q8K2A1-1</id>
        <name>1</name>
        <sequence type="displayed"/>
    </isoform>
    <isoform>
        <id>Q8K2A1-2</id>
        <name>2</name>
        <sequence type="described" ref="VSP_027252"/>
    </isoform>
</comment>
<comment type="tissue specificity">
    <text evidence="6">Detected throughout the brain, particularly in Purkinje cells, hippocampal and cortical neurons (at protein level).</text>
</comment>
<comment type="similarity">
    <text evidence="10">Belongs to the ced-6 family.</text>
</comment>
<comment type="sequence caution" evidence="10">
    <conflict type="erroneous initiation">
        <sequence resource="EMBL-CDS" id="BAB29151"/>
    </conflict>
</comment>
<keyword id="KW-0025">Alternative splicing</keyword>
<keyword id="KW-0053">Apoptosis</keyword>
<keyword id="KW-0175">Coiled coil</keyword>
<keyword id="KW-0963">Cytoplasm</keyword>
<keyword id="KW-0445">Lipid transport</keyword>
<keyword id="KW-0581">Phagocytosis</keyword>
<keyword id="KW-0597">Phosphoprotein</keyword>
<keyword id="KW-1185">Reference proteome</keyword>
<keyword id="KW-0813">Transport</keyword>
<gene>
    <name type="primary">Gulp1</name>
    <name type="synonym">Ced6</name>
</gene>
<name>GULP1_MOUSE</name>